<organism>
    <name type="scientific">Chlorobium limicola (strain DSM 245 / NBRC 103803 / 6330)</name>
    <dbReference type="NCBI Taxonomy" id="290315"/>
    <lineage>
        <taxon>Bacteria</taxon>
        <taxon>Pseudomonadati</taxon>
        <taxon>Chlorobiota</taxon>
        <taxon>Chlorobiia</taxon>
        <taxon>Chlorobiales</taxon>
        <taxon>Chlorobiaceae</taxon>
        <taxon>Chlorobium/Pelodictyon group</taxon>
        <taxon>Chlorobium</taxon>
    </lineage>
</organism>
<comment type="function">
    <text evidence="1">Catalyzes the NADPH-dependent reduction of glutamyl-tRNA(Glu) to glutamate 1-semialdehyde (GSA).</text>
</comment>
<comment type="catalytic activity">
    <reaction evidence="1">
        <text>(S)-4-amino-5-oxopentanoate + tRNA(Glu) + NADP(+) = L-glutamyl-tRNA(Glu) + NADPH + H(+)</text>
        <dbReference type="Rhea" id="RHEA:12344"/>
        <dbReference type="Rhea" id="RHEA-COMP:9663"/>
        <dbReference type="Rhea" id="RHEA-COMP:9680"/>
        <dbReference type="ChEBI" id="CHEBI:15378"/>
        <dbReference type="ChEBI" id="CHEBI:57501"/>
        <dbReference type="ChEBI" id="CHEBI:57783"/>
        <dbReference type="ChEBI" id="CHEBI:58349"/>
        <dbReference type="ChEBI" id="CHEBI:78442"/>
        <dbReference type="ChEBI" id="CHEBI:78520"/>
        <dbReference type="EC" id="1.2.1.70"/>
    </reaction>
</comment>
<comment type="pathway">
    <text evidence="1">Porphyrin-containing compound metabolism; protoporphyrin-IX biosynthesis; 5-aminolevulinate from L-glutamyl-tRNA(Glu): step 1/2.</text>
</comment>
<comment type="pathway">
    <text evidence="1">Porphyrin-containing compound metabolism; chlorophyll biosynthesis.</text>
</comment>
<comment type="subunit">
    <text evidence="1">Homodimer.</text>
</comment>
<comment type="domain">
    <text evidence="1">Possesses an unusual extended V-shaped dimeric structure with each monomer consisting of three distinct domains arranged along a curved 'spinal' alpha-helix. The N-terminal catalytic domain specifically recognizes the glutamate moiety of the substrate. The second domain is the NADPH-binding domain, and the third C-terminal domain is responsible for dimerization.</text>
</comment>
<comment type="miscellaneous">
    <text evidence="1">During catalysis, the active site Cys acts as a nucleophile attacking the alpha-carbonyl group of tRNA-bound glutamate with the formation of a thioester intermediate between enzyme and glutamate, and the concomitant release of tRNA(Glu). The thioester intermediate is finally reduced by direct hydride transfer from NADPH, to form the product GSA.</text>
</comment>
<comment type="similarity">
    <text evidence="1">Belongs to the glutamyl-tRNA reductase family.</text>
</comment>
<feature type="chain" id="PRO_1000093122" description="Glutamyl-tRNA reductase">
    <location>
        <begin position="1"/>
        <end position="423"/>
    </location>
</feature>
<feature type="active site" description="Nucleophile" evidence="1">
    <location>
        <position position="50"/>
    </location>
</feature>
<feature type="binding site" evidence="1">
    <location>
        <begin position="49"/>
        <end position="52"/>
    </location>
    <ligand>
        <name>substrate</name>
    </ligand>
</feature>
<feature type="binding site" evidence="1">
    <location>
        <position position="109"/>
    </location>
    <ligand>
        <name>substrate</name>
    </ligand>
</feature>
<feature type="binding site" evidence="1">
    <location>
        <begin position="114"/>
        <end position="116"/>
    </location>
    <ligand>
        <name>substrate</name>
    </ligand>
</feature>
<feature type="binding site" evidence="1">
    <location>
        <position position="120"/>
    </location>
    <ligand>
        <name>substrate</name>
    </ligand>
</feature>
<feature type="binding site" evidence="1">
    <location>
        <begin position="189"/>
        <end position="194"/>
    </location>
    <ligand>
        <name>NADP(+)</name>
        <dbReference type="ChEBI" id="CHEBI:58349"/>
    </ligand>
</feature>
<feature type="site" description="Important for activity" evidence="1">
    <location>
        <position position="99"/>
    </location>
</feature>
<name>HEM1_CHLL2</name>
<sequence length="423" mass="48180">MNIISVGVNHKTAPIEIRERIALSEVQNKEFITDLISSGLAHEAMVVSTCNRTELYVVPAMTEVTGEYLKEYLISFKDARKEVRPEHFFSRFYCGTARHLFEVSSAIDSLVLGEGQILGQVKDAYRIAAEVQAAGILITRLCHTAFSVAKKVKTKTKIMEGAVSVSYAAVELAQKIFSNLSMKKILLIGAGETGELAAKHMCQKNARNIVITNRTLSKAEALAEELGTGKVLPFESYKEYLHEFDIIITAVSTKEYVLREAEMHQSMQKRRLKPVIILDLGLPRNVDPDISRLQNMFLKDIDALKHIIDKNLEKRRGELPKVQAIIEEELVSFGQWINTLKVRPTIVDLQSKFIEIKEKELERYRYKVSEEELRRMEHLTERILKKILHHPIKMLKAPIDTSDSIPSRVNLVRNIFDLEEPNQ</sequence>
<evidence type="ECO:0000255" key="1">
    <source>
        <dbReference type="HAMAP-Rule" id="MF_00087"/>
    </source>
</evidence>
<gene>
    <name evidence="1" type="primary">hemA</name>
    <name type="ordered locus">Clim_0894</name>
</gene>
<reference key="1">
    <citation type="submission" date="2008-05" db="EMBL/GenBank/DDBJ databases">
        <title>Complete sequence of Chlorobium limicola DSM 245.</title>
        <authorList>
            <consortium name="US DOE Joint Genome Institute"/>
            <person name="Lucas S."/>
            <person name="Copeland A."/>
            <person name="Lapidus A."/>
            <person name="Glavina del Rio T."/>
            <person name="Dalin E."/>
            <person name="Tice H."/>
            <person name="Bruce D."/>
            <person name="Goodwin L."/>
            <person name="Pitluck S."/>
            <person name="Schmutz J."/>
            <person name="Larimer F."/>
            <person name="Land M."/>
            <person name="Hauser L."/>
            <person name="Kyrpides N."/>
            <person name="Ovchinnikova G."/>
            <person name="Zhao F."/>
            <person name="Li T."/>
            <person name="Liu Z."/>
            <person name="Overmann J."/>
            <person name="Bryant D.A."/>
            <person name="Richardson P."/>
        </authorList>
    </citation>
    <scope>NUCLEOTIDE SEQUENCE [LARGE SCALE GENOMIC DNA]</scope>
    <source>
        <strain>DSM 245 / NBRC 103803 / 6330</strain>
    </source>
</reference>
<proteinExistence type="inferred from homology"/>
<keyword id="KW-0149">Chlorophyll biosynthesis</keyword>
<keyword id="KW-0521">NADP</keyword>
<keyword id="KW-0560">Oxidoreductase</keyword>
<keyword id="KW-0627">Porphyrin biosynthesis</keyword>
<accession>B3EIN2</accession>
<dbReference type="EC" id="1.2.1.70" evidence="1"/>
<dbReference type="EMBL" id="CP001097">
    <property type="protein sequence ID" value="ACD89973.1"/>
    <property type="molecule type" value="Genomic_DNA"/>
</dbReference>
<dbReference type="RefSeq" id="WP_012465852.1">
    <property type="nucleotide sequence ID" value="NC_010803.1"/>
</dbReference>
<dbReference type="SMR" id="B3EIN2"/>
<dbReference type="STRING" id="290315.Clim_0894"/>
<dbReference type="KEGG" id="cli:Clim_0894"/>
<dbReference type="eggNOG" id="COG0373">
    <property type="taxonomic scope" value="Bacteria"/>
</dbReference>
<dbReference type="HOGENOM" id="CLU_035113_2_2_10"/>
<dbReference type="OrthoDB" id="110209at2"/>
<dbReference type="UniPathway" id="UPA00251">
    <property type="reaction ID" value="UER00316"/>
</dbReference>
<dbReference type="UniPathway" id="UPA00668"/>
<dbReference type="Proteomes" id="UP000008841">
    <property type="component" value="Chromosome"/>
</dbReference>
<dbReference type="GO" id="GO:0008883">
    <property type="term" value="F:glutamyl-tRNA reductase activity"/>
    <property type="evidence" value="ECO:0007669"/>
    <property type="project" value="UniProtKB-UniRule"/>
</dbReference>
<dbReference type="GO" id="GO:0050661">
    <property type="term" value="F:NADP binding"/>
    <property type="evidence" value="ECO:0007669"/>
    <property type="project" value="InterPro"/>
</dbReference>
<dbReference type="GO" id="GO:0015995">
    <property type="term" value="P:chlorophyll biosynthetic process"/>
    <property type="evidence" value="ECO:0007669"/>
    <property type="project" value="UniProtKB-UniRule"/>
</dbReference>
<dbReference type="GO" id="GO:0019353">
    <property type="term" value="P:protoporphyrinogen IX biosynthetic process from glutamate"/>
    <property type="evidence" value="ECO:0007669"/>
    <property type="project" value="TreeGrafter"/>
</dbReference>
<dbReference type="CDD" id="cd05213">
    <property type="entry name" value="NAD_bind_Glutamyl_tRNA_reduct"/>
    <property type="match status" value="1"/>
</dbReference>
<dbReference type="FunFam" id="3.30.460.30:FF:000001">
    <property type="entry name" value="Glutamyl-tRNA reductase"/>
    <property type="match status" value="1"/>
</dbReference>
<dbReference type="FunFam" id="3.40.50.720:FF:000031">
    <property type="entry name" value="Glutamyl-tRNA reductase"/>
    <property type="match status" value="1"/>
</dbReference>
<dbReference type="Gene3D" id="3.30.460.30">
    <property type="entry name" value="Glutamyl-tRNA reductase, N-terminal domain"/>
    <property type="match status" value="1"/>
</dbReference>
<dbReference type="Gene3D" id="3.40.50.720">
    <property type="entry name" value="NAD(P)-binding Rossmann-like Domain"/>
    <property type="match status" value="1"/>
</dbReference>
<dbReference type="HAMAP" id="MF_00087">
    <property type="entry name" value="Glu_tRNA_reductase"/>
    <property type="match status" value="1"/>
</dbReference>
<dbReference type="InterPro" id="IPR000343">
    <property type="entry name" value="4pyrrol_synth_GluRdtase"/>
</dbReference>
<dbReference type="InterPro" id="IPR015896">
    <property type="entry name" value="4pyrrol_synth_GluRdtase_dimer"/>
</dbReference>
<dbReference type="InterPro" id="IPR015895">
    <property type="entry name" value="4pyrrol_synth_GluRdtase_N"/>
</dbReference>
<dbReference type="InterPro" id="IPR018214">
    <property type="entry name" value="GluRdtase_CS"/>
</dbReference>
<dbReference type="InterPro" id="IPR036453">
    <property type="entry name" value="GluRdtase_dimer_dom_sf"/>
</dbReference>
<dbReference type="InterPro" id="IPR036343">
    <property type="entry name" value="GluRdtase_N_sf"/>
</dbReference>
<dbReference type="InterPro" id="IPR036291">
    <property type="entry name" value="NAD(P)-bd_dom_sf"/>
</dbReference>
<dbReference type="InterPro" id="IPR006151">
    <property type="entry name" value="Shikm_DH/Glu-tRNA_Rdtase"/>
</dbReference>
<dbReference type="NCBIfam" id="TIGR01035">
    <property type="entry name" value="hemA"/>
    <property type="match status" value="1"/>
</dbReference>
<dbReference type="PANTHER" id="PTHR43013">
    <property type="entry name" value="GLUTAMYL-TRNA REDUCTASE"/>
    <property type="match status" value="1"/>
</dbReference>
<dbReference type="PANTHER" id="PTHR43013:SF1">
    <property type="entry name" value="GLUTAMYL-TRNA REDUCTASE"/>
    <property type="match status" value="1"/>
</dbReference>
<dbReference type="Pfam" id="PF00745">
    <property type="entry name" value="GlutR_dimer"/>
    <property type="match status" value="1"/>
</dbReference>
<dbReference type="Pfam" id="PF05201">
    <property type="entry name" value="GlutR_N"/>
    <property type="match status" value="1"/>
</dbReference>
<dbReference type="Pfam" id="PF01488">
    <property type="entry name" value="Shikimate_DH"/>
    <property type="match status" value="1"/>
</dbReference>
<dbReference type="PIRSF" id="PIRSF000445">
    <property type="entry name" value="4pyrrol_synth_GluRdtase"/>
    <property type="match status" value="1"/>
</dbReference>
<dbReference type="SUPFAM" id="SSF69742">
    <property type="entry name" value="Glutamyl tRNA-reductase catalytic, N-terminal domain"/>
    <property type="match status" value="1"/>
</dbReference>
<dbReference type="SUPFAM" id="SSF69075">
    <property type="entry name" value="Glutamyl tRNA-reductase dimerization domain"/>
    <property type="match status" value="1"/>
</dbReference>
<dbReference type="SUPFAM" id="SSF51735">
    <property type="entry name" value="NAD(P)-binding Rossmann-fold domains"/>
    <property type="match status" value="1"/>
</dbReference>
<dbReference type="PROSITE" id="PS00747">
    <property type="entry name" value="GLUTR"/>
    <property type="match status" value="1"/>
</dbReference>
<protein>
    <recommendedName>
        <fullName evidence="1">Glutamyl-tRNA reductase</fullName>
        <shortName evidence="1">GluTR</shortName>
        <ecNumber evidence="1">1.2.1.70</ecNumber>
    </recommendedName>
</protein>